<organism>
    <name type="scientific">Halobacterium sp. (strain SG1)</name>
    <dbReference type="NCBI Taxonomy" id="33006"/>
    <lineage>
        <taxon>Archaea</taxon>
        <taxon>Methanobacteriati</taxon>
        <taxon>Methanobacteriota</taxon>
        <taxon>Stenosarchaea group</taxon>
        <taxon>Halobacteria</taxon>
        <taxon>Halobacteriales</taxon>
        <taxon>Halobacteriaceae</taxon>
        <taxon>Halobacterium</taxon>
    </lineage>
</organism>
<proteinExistence type="evidence at protein level"/>
<name>BACR1_HALSS</name>
<reference key="1">
    <citation type="journal article" date="1993" name="J. Bacteriol.">
        <title>Bacterioopsin, haloopsin, and sensory opsin I of the halobacterial isolate Halobacterium sp. strain SG1: three new members of a growing family.</title>
        <authorList>
            <person name="Soppa J."/>
            <person name="Duschl J."/>
            <person name="Oesterhelt D."/>
        </authorList>
    </citation>
    <scope>NUCLEOTIDE SEQUENCE [GENOMIC DNA]</scope>
</reference>
<feature type="propeptide" id="PRO_0000020250" evidence="1">
    <location>
        <begin position="1"/>
        <end position="6"/>
    </location>
</feature>
<feature type="chain" id="PRO_0000020251" description="Archaerhodopsin-1">
    <location>
        <begin position="7"/>
        <end position="260"/>
    </location>
</feature>
<feature type="topological domain" description="Extracellular" evidence="1">
    <location>
        <begin position="7"/>
        <end position="20"/>
    </location>
</feature>
<feature type="transmembrane region" description="Helical; Name=Helix A" evidence="1">
    <location>
        <begin position="21"/>
        <end position="42"/>
    </location>
</feature>
<feature type="topological domain" description="Cytoplasmic" evidence="1">
    <location>
        <begin position="43"/>
        <end position="51"/>
    </location>
</feature>
<feature type="transmembrane region" description="Helical; Name=Helix B" evidence="1">
    <location>
        <begin position="52"/>
        <end position="73"/>
    </location>
</feature>
<feature type="topological domain" description="Extracellular" evidence="1">
    <location>
        <begin position="74"/>
        <end position="91"/>
    </location>
</feature>
<feature type="transmembrane region" description="Helical; Name=Helix C" evidence="1">
    <location>
        <begin position="92"/>
        <end position="113"/>
    </location>
</feature>
<feature type="topological domain" description="Cytoplasmic" evidence="1">
    <location>
        <begin position="114"/>
        <end position="116"/>
    </location>
</feature>
<feature type="transmembrane region" description="Helical; Name=Helix D" evidence="1">
    <location>
        <begin position="117"/>
        <end position="139"/>
    </location>
</feature>
<feature type="topological domain" description="Extracellular" evidence="1">
    <location>
        <begin position="140"/>
        <end position="143"/>
    </location>
</feature>
<feature type="transmembrane region" description="Helical; Name=Helix E" evidence="1">
    <location>
        <begin position="144"/>
        <end position="172"/>
    </location>
</feature>
<feature type="topological domain" description="Cytoplasmic" evidence="1">
    <location>
        <begin position="173"/>
        <end position="176"/>
    </location>
</feature>
<feature type="transmembrane region" description="Helical; Name=Helix F" evidence="1">
    <location>
        <begin position="177"/>
        <end position="204"/>
    </location>
</feature>
<feature type="topological domain" description="Extracellular" evidence="1">
    <location>
        <begin position="205"/>
        <end position="212"/>
    </location>
</feature>
<feature type="transmembrane region" description="Helical; Name=Helix G" evidence="1">
    <location>
        <begin position="213"/>
        <end position="245"/>
    </location>
</feature>
<feature type="topological domain" description="Cytoplasmic" evidence="1">
    <location>
        <begin position="246"/>
        <end position="260"/>
    </location>
</feature>
<feature type="modified residue" description="N6-(retinylidene)lysine">
    <location>
        <position position="228"/>
    </location>
</feature>
<protein>
    <recommendedName>
        <fullName>Archaerhodopsin-1</fullName>
        <shortName>AR 1</shortName>
    </recommendedName>
    <alternativeName>
        <fullName>Bacterio-opsin</fullName>
    </alternativeName>
</protein>
<gene>
    <name type="primary">bop</name>
</gene>
<accession>P69052</accession>
<accession>P19585</accession>
<dbReference type="EMBL" id="X70291">
    <property type="protein sequence ID" value="CAA49772.1"/>
    <property type="molecule type" value="Genomic_DNA"/>
</dbReference>
<dbReference type="PIR" id="A34178">
    <property type="entry name" value="A34178"/>
</dbReference>
<dbReference type="SMR" id="P69052"/>
<dbReference type="GO" id="GO:0005886">
    <property type="term" value="C:plasma membrane"/>
    <property type="evidence" value="ECO:0007669"/>
    <property type="project" value="UniProtKB-SubCell"/>
</dbReference>
<dbReference type="GO" id="GO:0005216">
    <property type="term" value="F:monoatomic ion channel activity"/>
    <property type="evidence" value="ECO:0007669"/>
    <property type="project" value="InterPro"/>
</dbReference>
<dbReference type="GO" id="GO:0009881">
    <property type="term" value="F:photoreceptor activity"/>
    <property type="evidence" value="ECO:0007669"/>
    <property type="project" value="UniProtKB-KW"/>
</dbReference>
<dbReference type="GO" id="GO:0007602">
    <property type="term" value="P:phototransduction"/>
    <property type="evidence" value="ECO:0007669"/>
    <property type="project" value="UniProtKB-KW"/>
</dbReference>
<dbReference type="GO" id="GO:1902600">
    <property type="term" value="P:proton transmembrane transport"/>
    <property type="evidence" value="ECO:0007669"/>
    <property type="project" value="UniProtKB-KW"/>
</dbReference>
<dbReference type="CDD" id="cd15244">
    <property type="entry name" value="7tm_bacteriorhodopsin"/>
    <property type="match status" value="1"/>
</dbReference>
<dbReference type="Gene3D" id="1.20.1070.10">
    <property type="entry name" value="Rhodopsin 7-helix transmembrane proteins"/>
    <property type="match status" value="1"/>
</dbReference>
<dbReference type="InterPro" id="IPR001425">
    <property type="entry name" value="Arc/bac/fun_rhodopsins"/>
</dbReference>
<dbReference type="InterPro" id="IPR018229">
    <property type="entry name" value="Rhodopsin_retinal_BS"/>
</dbReference>
<dbReference type="PANTHER" id="PTHR28286">
    <property type="match status" value="1"/>
</dbReference>
<dbReference type="PANTHER" id="PTHR28286:SF2">
    <property type="entry name" value="BACTERIORHODOPSIN _OPSIN, NOPA (EUROFUNG)"/>
    <property type="match status" value="1"/>
</dbReference>
<dbReference type="Pfam" id="PF01036">
    <property type="entry name" value="Bac_rhodopsin"/>
    <property type="match status" value="1"/>
</dbReference>
<dbReference type="PRINTS" id="PR00251">
    <property type="entry name" value="BACTRLOPSIN"/>
</dbReference>
<dbReference type="SMART" id="SM01021">
    <property type="entry name" value="Bac_rhodopsin"/>
    <property type="match status" value="1"/>
</dbReference>
<dbReference type="SUPFAM" id="SSF81321">
    <property type="entry name" value="Family A G protein-coupled receptor-like"/>
    <property type="match status" value="1"/>
</dbReference>
<dbReference type="PROSITE" id="PS00950">
    <property type="entry name" value="BACTERIAL_OPSIN_1"/>
    <property type="match status" value="1"/>
</dbReference>
<dbReference type="PROSITE" id="PS00327">
    <property type="entry name" value="BACTERIAL_OPSIN_RET"/>
    <property type="match status" value="1"/>
</dbReference>
<keyword id="KW-1003">Cell membrane</keyword>
<keyword id="KW-0157">Chromophore</keyword>
<keyword id="KW-0375">Hydrogen ion transport</keyword>
<keyword id="KW-0406">Ion transport</keyword>
<keyword id="KW-0472">Membrane</keyword>
<keyword id="KW-0600">Photoreceptor protein</keyword>
<keyword id="KW-0675">Receptor</keyword>
<keyword id="KW-0681">Retinal protein</keyword>
<keyword id="KW-0716">Sensory transduction</keyword>
<keyword id="KW-0812">Transmembrane</keyword>
<keyword id="KW-1133">Transmembrane helix</keyword>
<keyword id="KW-0813">Transport</keyword>
<sequence>MDPIALTAAVGADLLGDGRPETLWLGIGTLLMLIGTFYFIVKGWGVTDKEAREYYSITILVPGIASAAYLSMFFGIGLTEVQVGSEMLDIYYARYADWLFTTPLLLLDLALLAKVDRVSIGTLVGVDALMIVTGLVGALSHTPLARYTWWLFSTICMIVVLYFLATSLRAAAKERGPEVASTFNTLTALVLVLWTAYPILWIIGTEGAGVVGLGIETLLFMVLDVTAKVGFGFILLRSRAILGDTEAPEPSAGAEASAAD</sequence>
<evidence type="ECO:0000250" key="1"/>
<evidence type="ECO:0000305" key="2"/>
<comment type="function">
    <text>Light-driven proton pump. It may interact with bacterioruberin in the claret membrane.</text>
</comment>
<comment type="subcellular location">
    <subcellularLocation>
        <location>Cell membrane</location>
        <topology>Multi-pass membrane protein</topology>
    </subcellularLocation>
</comment>
<comment type="similarity">
    <text evidence="2">Belongs to the archaeal/bacterial/fungal opsin family.</text>
</comment>